<feature type="chain" id="PRO_0000164702" description="Gene 4 protein">
    <location>
        <begin position="1"/>
        <end position="98"/>
    </location>
</feature>
<feature type="domain" description="HNH">
    <location>
        <begin position="41"/>
        <end position="73"/>
    </location>
</feature>
<feature type="region of interest" description="Disordered" evidence="1">
    <location>
        <begin position="75"/>
        <end position="98"/>
    </location>
</feature>
<feature type="compositionally biased region" description="Basic residues" evidence="1">
    <location>
        <begin position="81"/>
        <end position="98"/>
    </location>
</feature>
<protein>
    <recommendedName>
        <fullName>Gene 4 protein</fullName>
    </recommendedName>
    <alternativeName>
        <fullName>Gp4</fullName>
    </alternativeName>
</protein>
<organismHost>
    <name type="scientific">Mycobacterium</name>
    <dbReference type="NCBI Taxonomy" id="1763"/>
</organismHost>
<keyword id="KW-1185">Reference proteome</keyword>
<proteinExistence type="predicted"/>
<name>VG04_BPMD2</name>
<gene>
    <name type="primary">4</name>
</gene>
<accession>O64200</accession>
<organism>
    <name type="scientific">Mycobacterium phage D29</name>
    <name type="common">Mycobacteriophage D29</name>
    <dbReference type="NCBI Taxonomy" id="28369"/>
    <lineage>
        <taxon>Viruses</taxon>
        <taxon>Duplodnaviria</taxon>
        <taxon>Heunggongvirae</taxon>
        <taxon>Uroviricota</taxon>
        <taxon>Caudoviricetes</taxon>
        <taxon>Fromanvirus</taxon>
    </lineage>
</organism>
<sequence>MSWAGSKRRQELPEDWELNYRLPVLSAAGWLCEVDGPGCVRAATDVDHKKPGNDHSRSNLQAICRVCHGKKSAAEGVARRRELKARRKRPEQRHPGRR</sequence>
<evidence type="ECO:0000256" key="1">
    <source>
        <dbReference type="SAM" id="MobiDB-lite"/>
    </source>
</evidence>
<reference key="1">
    <citation type="journal article" date="1998" name="J. Mol. Biol.">
        <title>Genome structure of mycobacteriophage D29: implications for phage evolution.</title>
        <authorList>
            <person name="Ford M.E."/>
            <person name="Sarkis G.J."/>
            <person name="Belanger A.E."/>
            <person name="Hendrix R.W."/>
            <person name="Hatfull G.F."/>
        </authorList>
    </citation>
    <scope>NUCLEOTIDE SEQUENCE [LARGE SCALE GENOMIC DNA]</scope>
</reference>
<dbReference type="EMBL" id="AF022214">
    <property type="protein sequence ID" value="AAC18447.1"/>
    <property type="molecule type" value="Genomic_DNA"/>
</dbReference>
<dbReference type="PIR" id="D72800">
    <property type="entry name" value="D72800"/>
</dbReference>
<dbReference type="RefSeq" id="NP_046822.1">
    <property type="nucleotide sequence ID" value="NC_001900.1"/>
</dbReference>
<dbReference type="SMR" id="O64200"/>
<dbReference type="GeneID" id="1261578"/>
<dbReference type="KEGG" id="vg:1261578"/>
<dbReference type="OrthoDB" id="17914at10239"/>
<dbReference type="Proteomes" id="UP000002131">
    <property type="component" value="Segment"/>
</dbReference>
<dbReference type="GO" id="GO:0004519">
    <property type="term" value="F:endonuclease activity"/>
    <property type="evidence" value="ECO:0007669"/>
    <property type="project" value="InterPro"/>
</dbReference>
<dbReference type="GO" id="GO:0003676">
    <property type="term" value="F:nucleic acid binding"/>
    <property type="evidence" value="ECO:0007669"/>
    <property type="project" value="InterPro"/>
</dbReference>
<dbReference type="GO" id="GO:0008270">
    <property type="term" value="F:zinc ion binding"/>
    <property type="evidence" value="ECO:0007669"/>
    <property type="project" value="InterPro"/>
</dbReference>
<dbReference type="CDD" id="cd00085">
    <property type="entry name" value="HNHc"/>
    <property type="match status" value="1"/>
</dbReference>
<dbReference type="Gene3D" id="1.10.30.50">
    <property type="match status" value="1"/>
</dbReference>
<dbReference type="InterPro" id="IPR002711">
    <property type="entry name" value="HNH"/>
</dbReference>
<dbReference type="InterPro" id="IPR003615">
    <property type="entry name" value="HNH_nuc"/>
</dbReference>
<dbReference type="Pfam" id="PF01844">
    <property type="entry name" value="HNH"/>
    <property type="match status" value="1"/>
</dbReference>
<dbReference type="SMART" id="SM00507">
    <property type="entry name" value="HNHc"/>
    <property type="match status" value="1"/>
</dbReference>